<evidence type="ECO:0000255" key="1">
    <source>
        <dbReference type="HAMAP-Rule" id="MF_01063"/>
    </source>
</evidence>
<dbReference type="EC" id="3.1.1.1" evidence="1"/>
<dbReference type="EMBL" id="CU928161">
    <property type="protein sequence ID" value="CAR01629.1"/>
    <property type="molecule type" value="Genomic_DNA"/>
</dbReference>
<dbReference type="RefSeq" id="WP_000189577.1">
    <property type="nucleotide sequence ID" value="NC_011742.1"/>
</dbReference>
<dbReference type="SMR" id="B7MC89"/>
<dbReference type="ESTHER" id="ecoli-yafa">
    <property type="family name" value="Duf_1100-R"/>
</dbReference>
<dbReference type="KEGG" id="ecz:ECS88_0274"/>
<dbReference type="HOGENOM" id="CLU_036819_0_0_6"/>
<dbReference type="Proteomes" id="UP000000747">
    <property type="component" value="Chromosome"/>
</dbReference>
<dbReference type="GO" id="GO:0106435">
    <property type="term" value="F:carboxylesterase activity"/>
    <property type="evidence" value="ECO:0007669"/>
    <property type="project" value="UniProtKB-EC"/>
</dbReference>
<dbReference type="FunFam" id="3.40.50.1820:FF:000022">
    <property type="entry name" value="Esterase FrsA"/>
    <property type="match status" value="1"/>
</dbReference>
<dbReference type="Gene3D" id="3.40.50.1820">
    <property type="entry name" value="alpha/beta hydrolase"/>
    <property type="match status" value="1"/>
</dbReference>
<dbReference type="HAMAP" id="MF_01063">
    <property type="entry name" value="FrsA"/>
    <property type="match status" value="1"/>
</dbReference>
<dbReference type="InterPro" id="IPR029058">
    <property type="entry name" value="AB_hydrolase_fold"/>
</dbReference>
<dbReference type="InterPro" id="IPR043423">
    <property type="entry name" value="FrsA"/>
</dbReference>
<dbReference type="InterPro" id="IPR010520">
    <property type="entry name" value="FrsA-like"/>
</dbReference>
<dbReference type="InterPro" id="IPR050261">
    <property type="entry name" value="FrsA_esterase"/>
</dbReference>
<dbReference type="NCBIfam" id="NF003460">
    <property type="entry name" value="PRK05077.1"/>
    <property type="match status" value="1"/>
</dbReference>
<dbReference type="PANTHER" id="PTHR22946">
    <property type="entry name" value="DIENELACTONE HYDROLASE DOMAIN-CONTAINING PROTEIN-RELATED"/>
    <property type="match status" value="1"/>
</dbReference>
<dbReference type="PANTHER" id="PTHR22946:SF4">
    <property type="entry name" value="ESTERASE FRSA"/>
    <property type="match status" value="1"/>
</dbReference>
<dbReference type="Pfam" id="PF06500">
    <property type="entry name" value="FrsA-like"/>
    <property type="match status" value="1"/>
</dbReference>
<dbReference type="SUPFAM" id="SSF53474">
    <property type="entry name" value="alpha/beta-Hydrolases"/>
    <property type="match status" value="1"/>
</dbReference>
<comment type="function">
    <text evidence="1">Catalyzes the hydrolysis of esters.</text>
</comment>
<comment type="catalytic activity">
    <reaction evidence="1">
        <text>a carboxylic ester + H2O = an alcohol + a carboxylate + H(+)</text>
        <dbReference type="Rhea" id="RHEA:21164"/>
        <dbReference type="ChEBI" id="CHEBI:15377"/>
        <dbReference type="ChEBI" id="CHEBI:15378"/>
        <dbReference type="ChEBI" id="CHEBI:29067"/>
        <dbReference type="ChEBI" id="CHEBI:30879"/>
        <dbReference type="ChEBI" id="CHEBI:33308"/>
        <dbReference type="EC" id="3.1.1.1"/>
    </reaction>
</comment>
<comment type="similarity">
    <text evidence="1">Belongs to the FrsA family.</text>
</comment>
<accession>B7MC89</accession>
<sequence length="414" mass="46996">MTQANLSETLFKPRFKHPETSTLVRRFSHGAQPPVQSALDGKTIPHWYRMINRLMWIWRGIDPREILDVQARIVMSDAERTDDDLYDTVIGYRGGNWIYEWATQAMVWQQKACAEEDPQLSGRHWLHAATLYNIAAYPHLKGDDLAEQAQALSNRAYEEAAQRLPGTMRQMEFTVPGGAPITGFLHMPKGDGPFPTVLMCGGLDAMQTDYYSLYERYFAPRGIAMLTIDMPSVGFSSKWKLTQDSSLLHQHVLKALPNVPWVDHTRVAAFGFRFGANVAVRLAYLESPRLKAVACLGPVVHTLLSDFKCQQQVPEMYLDVLASRLGMHDASDEALRVELNRYSLKVQGLLGRRCPTPMLSGYWKNDPFSPEEDSRLITSSSADGKLLEIPFNPVYRNFDKGLQEITDWIEKRLC</sequence>
<gene>
    <name evidence="1" type="primary">frsA</name>
    <name type="ordered locus">ECS88_0274</name>
</gene>
<reference key="1">
    <citation type="journal article" date="2009" name="PLoS Genet.">
        <title>Organised genome dynamics in the Escherichia coli species results in highly diverse adaptive paths.</title>
        <authorList>
            <person name="Touchon M."/>
            <person name="Hoede C."/>
            <person name="Tenaillon O."/>
            <person name="Barbe V."/>
            <person name="Baeriswyl S."/>
            <person name="Bidet P."/>
            <person name="Bingen E."/>
            <person name="Bonacorsi S."/>
            <person name="Bouchier C."/>
            <person name="Bouvet O."/>
            <person name="Calteau A."/>
            <person name="Chiapello H."/>
            <person name="Clermont O."/>
            <person name="Cruveiller S."/>
            <person name="Danchin A."/>
            <person name="Diard M."/>
            <person name="Dossat C."/>
            <person name="Karoui M.E."/>
            <person name="Frapy E."/>
            <person name="Garry L."/>
            <person name="Ghigo J.M."/>
            <person name="Gilles A.M."/>
            <person name="Johnson J."/>
            <person name="Le Bouguenec C."/>
            <person name="Lescat M."/>
            <person name="Mangenot S."/>
            <person name="Martinez-Jehanne V."/>
            <person name="Matic I."/>
            <person name="Nassif X."/>
            <person name="Oztas S."/>
            <person name="Petit M.A."/>
            <person name="Pichon C."/>
            <person name="Rouy Z."/>
            <person name="Ruf C.S."/>
            <person name="Schneider D."/>
            <person name="Tourret J."/>
            <person name="Vacherie B."/>
            <person name="Vallenet D."/>
            <person name="Medigue C."/>
            <person name="Rocha E.P.C."/>
            <person name="Denamur E."/>
        </authorList>
    </citation>
    <scope>NUCLEOTIDE SEQUENCE [LARGE SCALE GENOMIC DNA]</scope>
    <source>
        <strain>S88 / ExPEC</strain>
    </source>
</reference>
<protein>
    <recommendedName>
        <fullName evidence="1">Esterase FrsA</fullName>
        <ecNumber evidence="1">3.1.1.1</ecNumber>
    </recommendedName>
</protein>
<keyword id="KW-0378">Hydrolase</keyword>
<keyword id="KW-1185">Reference proteome</keyword>
<keyword id="KW-0719">Serine esterase</keyword>
<feature type="chain" id="PRO_1000136509" description="Esterase FrsA">
    <location>
        <begin position="1"/>
        <end position="414"/>
    </location>
</feature>
<proteinExistence type="inferred from homology"/>
<name>FRSA_ECO45</name>
<organism>
    <name type="scientific">Escherichia coli O45:K1 (strain S88 / ExPEC)</name>
    <dbReference type="NCBI Taxonomy" id="585035"/>
    <lineage>
        <taxon>Bacteria</taxon>
        <taxon>Pseudomonadati</taxon>
        <taxon>Pseudomonadota</taxon>
        <taxon>Gammaproteobacteria</taxon>
        <taxon>Enterobacterales</taxon>
        <taxon>Enterobacteriaceae</taxon>
        <taxon>Escherichia</taxon>
    </lineage>
</organism>